<feature type="chain" id="PRO_0000080113" description="Bifunctional protein HldE">
    <location>
        <begin position="1"/>
        <end position="482"/>
    </location>
</feature>
<feature type="region of interest" description="Ribokinase">
    <location>
        <begin position="1"/>
        <end position="322"/>
    </location>
</feature>
<feature type="region of interest" description="Cytidylyltransferase">
    <location>
        <begin position="350"/>
        <end position="482"/>
    </location>
</feature>
<feature type="active site" evidence="1">
    <location>
        <position position="267"/>
    </location>
</feature>
<feature type="binding site" evidence="1">
    <location>
        <begin position="198"/>
        <end position="201"/>
    </location>
    <ligand>
        <name>ATP</name>
        <dbReference type="ChEBI" id="CHEBI:30616"/>
    </ligand>
</feature>
<evidence type="ECO:0000255" key="1">
    <source>
        <dbReference type="HAMAP-Rule" id="MF_01603"/>
    </source>
</evidence>
<comment type="function">
    <text evidence="1">Catalyzes the phosphorylation of D-glycero-D-manno-heptose 7-phosphate at the C-1 position to selectively form D-glycero-beta-D-manno-heptose-1,7-bisphosphate.</text>
</comment>
<comment type="function">
    <text evidence="1">Catalyzes the ADP transfer from ATP to D-glycero-beta-D-manno-heptose 1-phosphate, yielding ADP-D-glycero-beta-D-manno-heptose.</text>
</comment>
<comment type="catalytic activity">
    <reaction evidence="1">
        <text>D-glycero-beta-D-manno-heptose 7-phosphate + ATP = D-glycero-beta-D-manno-heptose 1,7-bisphosphate + ADP + H(+)</text>
        <dbReference type="Rhea" id="RHEA:27473"/>
        <dbReference type="ChEBI" id="CHEBI:15378"/>
        <dbReference type="ChEBI" id="CHEBI:30616"/>
        <dbReference type="ChEBI" id="CHEBI:60204"/>
        <dbReference type="ChEBI" id="CHEBI:60208"/>
        <dbReference type="ChEBI" id="CHEBI:456216"/>
        <dbReference type="EC" id="2.7.1.167"/>
    </reaction>
</comment>
<comment type="catalytic activity">
    <reaction evidence="1">
        <text>D-glycero-beta-D-manno-heptose 1-phosphate + ATP + H(+) = ADP-D-glycero-beta-D-manno-heptose + diphosphate</text>
        <dbReference type="Rhea" id="RHEA:27465"/>
        <dbReference type="ChEBI" id="CHEBI:15378"/>
        <dbReference type="ChEBI" id="CHEBI:30616"/>
        <dbReference type="ChEBI" id="CHEBI:33019"/>
        <dbReference type="ChEBI" id="CHEBI:59967"/>
        <dbReference type="ChEBI" id="CHEBI:61593"/>
        <dbReference type="EC" id="2.7.7.70"/>
    </reaction>
</comment>
<comment type="pathway">
    <text evidence="1">Nucleotide-sugar biosynthesis; ADP-L-glycero-beta-D-manno-heptose biosynthesis; ADP-L-glycero-beta-D-manno-heptose from D-glycero-beta-D-manno-heptose 7-phosphate: step 1/4.</text>
</comment>
<comment type="pathway">
    <text evidence="1">Nucleotide-sugar biosynthesis; ADP-L-glycero-beta-D-manno-heptose biosynthesis; ADP-L-glycero-beta-D-manno-heptose from D-glycero-beta-D-manno-heptose 7-phosphate: step 3/4.</text>
</comment>
<comment type="pathway">
    <text>Bacterial outer membrane biogenesis; LPS core biosynthesis.</text>
</comment>
<comment type="subunit">
    <text evidence="1">Homodimer.</text>
</comment>
<comment type="similarity">
    <text evidence="1">In the N-terminal section; belongs to the carbohydrate kinase PfkB family.</text>
</comment>
<comment type="similarity">
    <text evidence="1">In the C-terminal section; belongs to the cytidylyltransferase family.</text>
</comment>
<name>HLDE_HELHP</name>
<protein>
    <recommendedName>
        <fullName evidence="1">Bifunctional protein HldE</fullName>
    </recommendedName>
    <domain>
        <recommendedName>
            <fullName evidence="1">D-beta-D-heptose 7-phosphate kinase</fullName>
            <ecNumber evidence="1">2.7.1.167</ecNumber>
        </recommendedName>
        <alternativeName>
            <fullName evidence="1">D-beta-D-heptose 7-phosphotransferase</fullName>
        </alternativeName>
        <alternativeName>
            <fullName evidence="1">D-glycero-beta-D-manno-heptose-7-phosphate kinase</fullName>
        </alternativeName>
    </domain>
    <domain>
        <recommendedName>
            <fullName evidence="1">D-beta-D-heptose 1-phosphate adenylyltransferase</fullName>
            <ecNumber evidence="1">2.7.7.70</ecNumber>
        </recommendedName>
        <alternativeName>
            <fullName evidence="1">D-glycero-beta-D-manno-heptose 1-phosphate adenylyltransferase</fullName>
        </alternativeName>
    </domain>
</protein>
<organism>
    <name type="scientific">Helicobacter hepaticus (strain ATCC 51449 / 3B1)</name>
    <dbReference type="NCBI Taxonomy" id="235279"/>
    <lineage>
        <taxon>Bacteria</taxon>
        <taxon>Pseudomonadati</taxon>
        <taxon>Campylobacterota</taxon>
        <taxon>Epsilonproteobacteria</taxon>
        <taxon>Campylobacterales</taxon>
        <taxon>Helicobacteraceae</taxon>
        <taxon>Helicobacter</taxon>
    </lineage>
</organism>
<proteinExistence type="inferred from homology"/>
<gene>
    <name evidence="1" type="primary">hldE</name>
    <name type="synonym">rfaE</name>
    <name type="ordered locus">HH_1532</name>
</gene>
<sequence length="482" mass="52979">MFGLESKSPKILVIGDLMIDHYVWGSCERISPEAPVQVVDVKDENNRLGGACNVVHNLIALNAQVFVCGVVGNDEAGFWLGEKLESMGVDISYLFVDTSRPTTKKTRVIIANQQVLRVDRESKTPIDSHIHNNIVQHLHAVLDEVDCIIISDYGKGLLNDELTHFVIDYAKSKSKLVLCDPKGKDYSKYTGATLLTPNKKEAELATGITICDKDSLIKAGMTLKTQCQLDISLITLSEDGIGIFDNNQIHIIPTRAKEVYDVTGAGDTVIAALSFALSSGCDIFQACEFANVAAAVVVGKVGSAVATHSEILQYIHTQPSNLQQYIESKIISQESLFTLLKDLKQSKIVFTNGCFDILHIGHLSYLNKARDLGDILIVGLNDDDSIKRLKGKERPINTLHNRALMLAGLECVDYVVSFCQDTPLELIKAIKPDVLVKGGDYHNKEVVGKEYAKEVVLIDFIEGHSTSNIIESIQRSKICKHS</sequence>
<keyword id="KW-0067">ATP-binding</keyword>
<keyword id="KW-0119">Carbohydrate metabolism</keyword>
<keyword id="KW-0418">Kinase</keyword>
<keyword id="KW-0448">Lipopolysaccharide biosynthesis</keyword>
<keyword id="KW-0511">Multifunctional enzyme</keyword>
<keyword id="KW-0547">Nucleotide-binding</keyword>
<keyword id="KW-0548">Nucleotidyltransferase</keyword>
<keyword id="KW-1185">Reference proteome</keyword>
<keyword id="KW-0808">Transferase</keyword>
<dbReference type="EC" id="2.7.1.167" evidence="1"/>
<dbReference type="EC" id="2.7.7.70" evidence="1"/>
<dbReference type="EMBL" id="AE017125">
    <property type="protein sequence ID" value="AAP78129.1"/>
    <property type="molecule type" value="Genomic_DNA"/>
</dbReference>
<dbReference type="RefSeq" id="WP_011116372.1">
    <property type="nucleotide sequence ID" value="NC_004917.1"/>
</dbReference>
<dbReference type="SMR" id="Q7VFZ3"/>
<dbReference type="STRING" id="235279.HH_1532"/>
<dbReference type="KEGG" id="hhe:HH_1532"/>
<dbReference type="eggNOG" id="COG0615">
    <property type="taxonomic scope" value="Bacteria"/>
</dbReference>
<dbReference type="eggNOG" id="COG2870">
    <property type="taxonomic scope" value="Bacteria"/>
</dbReference>
<dbReference type="HOGENOM" id="CLU_021150_2_1_7"/>
<dbReference type="OrthoDB" id="9802794at2"/>
<dbReference type="UniPathway" id="UPA00356">
    <property type="reaction ID" value="UER00437"/>
</dbReference>
<dbReference type="UniPathway" id="UPA00356">
    <property type="reaction ID" value="UER00439"/>
</dbReference>
<dbReference type="UniPathway" id="UPA00958"/>
<dbReference type="Proteomes" id="UP000002495">
    <property type="component" value="Chromosome"/>
</dbReference>
<dbReference type="GO" id="GO:0005829">
    <property type="term" value="C:cytosol"/>
    <property type="evidence" value="ECO:0007669"/>
    <property type="project" value="TreeGrafter"/>
</dbReference>
<dbReference type="GO" id="GO:0005524">
    <property type="term" value="F:ATP binding"/>
    <property type="evidence" value="ECO:0007669"/>
    <property type="project" value="UniProtKB-UniRule"/>
</dbReference>
<dbReference type="GO" id="GO:0033785">
    <property type="term" value="F:heptose 7-phosphate kinase activity"/>
    <property type="evidence" value="ECO:0007669"/>
    <property type="project" value="UniProtKB-UniRule"/>
</dbReference>
<dbReference type="GO" id="GO:0033786">
    <property type="term" value="F:heptose-1-phosphate adenylyltransferase activity"/>
    <property type="evidence" value="ECO:0007669"/>
    <property type="project" value="UniProtKB-UniRule"/>
</dbReference>
<dbReference type="GO" id="GO:0016773">
    <property type="term" value="F:phosphotransferase activity, alcohol group as acceptor"/>
    <property type="evidence" value="ECO:0007669"/>
    <property type="project" value="InterPro"/>
</dbReference>
<dbReference type="GO" id="GO:0097171">
    <property type="term" value="P:ADP-L-glycero-beta-D-manno-heptose biosynthetic process"/>
    <property type="evidence" value="ECO:0007669"/>
    <property type="project" value="UniProtKB-UniPathway"/>
</dbReference>
<dbReference type="GO" id="GO:0009244">
    <property type="term" value="P:lipopolysaccharide core region biosynthetic process"/>
    <property type="evidence" value="ECO:0007669"/>
    <property type="project" value="UniProtKB-UniPathway"/>
</dbReference>
<dbReference type="CDD" id="cd01172">
    <property type="entry name" value="RfaE_like"/>
    <property type="match status" value="1"/>
</dbReference>
<dbReference type="CDD" id="cd00636">
    <property type="entry name" value="TroA-like"/>
    <property type="match status" value="1"/>
</dbReference>
<dbReference type="FunFam" id="3.40.1190.20:FF:000002">
    <property type="entry name" value="Bifunctional protein HldE"/>
    <property type="match status" value="1"/>
</dbReference>
<dbReference type="Gene3D" id="3.40.1190.20">
    <property type="match status" value="1"/>
</dbReference>
<dbReference type="Gene3D" id="3.40.50.620">
    <property type="entry name" value="HUPs"/>
    <property type="match status" value="1"/>
</dbReference>
<dbReference type="HAMAP" id="MF_01603">
    <property type="entry name" value="HldE"/>
    <property type="match status" value="1"/>
</dbReference>
<dbReference type="InterPro" id="IPR023030">
    <property type="entry name" value="Bifunc_HldE"/>
</dbReference>
<dbReference type="InterPro" id="IPR002173">
    <property type="entry name" value="Carboh/pur_kinase_PfkB_CS"/>
</dbReference>
<dbReference type="InterPro" id="IPR004821">
    <property type="entry name" value="Cyt_trans-like"/>
</dbReference>
<dbReference type="InterPro" id="IPR011611">
    <property type="entry name" value="PfkB_dom"/>
</dbReference>
<dbReference type="InterPro" id="IPR011913">
    <property type="entry name" value="RfaE_dom_I"/>
</dbReference>
<dbReference type="InterPro" id="IPR011914">
    <property type="entry name" value="RfaE_dom_II"/>
</dbReference>
<dbReference type="InterPro" id="IPR029056">
    <property type="entry name" value="Ribokinase-like"/>
</dbReference>
<dbReference type="InterPro" id="IPR014729">
    <property type="entry name" value="Rossmann-like_a/b/a_fold"/>
</dbReference>
<dbReference type="NCBIfam" id="TIGR00125">
    <property type="entry name" value="cyt_tran_rel"/>
    <property type="match status" value="1"/>
</dbReference>
<dbReference type="NCBIfam" id="TIGR02198">
    <property type="entry name" value="rfaE_dom_I"/>
    <property type="match status" value="1"/>
</dbReference>
<dbReference type="NCBIfam" id="TIGR02199">
    <property type="entry name" value="rfaE_dom_II"/>
    <property type="match status" value="1"/>
</dbReference>
<dbReference type="PANTHER" id="PTHR46969">
    <property type="entry name" value="BIFUNCTIONAL PROTEIN HLDE"/>
    <property type="match status" value="1"/>
</dbReference>
<dbReference type="PANTHER" id="PTHR46969:SF1">
    <property type="entry name" value="BIFUNCTIONAL PROTEIN HLDE"/>
    <property type="match status" value="1"/>
</dbReference>
<dbReference type="Pfam" id="PF01467">
    <property type="entry name" value="CTP_transf_like"/>
    <property type="match status" value="1"/>
</dbReference>
<dbReference type="Pfam" id="PF00294">
    <property type="entry name" value="PfkB"/>
    <property type="match status" value="1"/>
</dbReference>
<dbReference type="SUPFAM" id="SSF52374">
    <property type="entry name" value="Nucleotidylyl transferase"/>
    <property type="match status" value="1"/>
</dbReference>
<dbReference type="SUPFAM" id="SSF53613">
    <property type="entry name" value="Ribokinase-like"/>
    <property type="match status" value="1"/>
</dbReference>
<dbReference type="PROSITE" id="PS00584">
    <property type="entry name" value="PFKB_KINASES_2"/>
    <property type="match status" value="1"/>
</dbReference>
<accession>Q7VFZ3</accession>
<reference key="1">
    <citation type="journal article" date="2003" name="Proc. Natl. Acad. Sci. U.S.A.">
        <title>The complete genome sequence of the carcinogenic bacterium Helicobacter hepaticus.</title>
        <authorList>
            <person name="Suerbaum S."/>
            <person name="Josenhans C."/>
            <person name="Sterzenbach T."/>
            <person name="Drescher B."/>
            <person name="Brandt P."/>
            <person name="Bell M."/>
            <person name="Droege M."/>
            <person name="Fartmann B."/>
            <person name="Fischer H.-P."/>
            <person name="Ge Z."/>
            <person name="Hoerster A."/>
            <person name="Holland R."/>
            <person name="Klein K."/>
            <person name="Koenig J."/>
            <person name="Macko L."/>
            <person name="Mendz G.L."/>
            <person name="Nyakatura G."/>
            <person name="Schauer D.B."/>
            <person name="Shen Z."/>
            <person name="Weber J."/>
            <person name="Frosch M."/>
            <person name="Fox J.G."/>
        </authorList>
    </citation>
    <scope>NUCLEOTIDE SEQUENCE [LARGE SCALE GENOMIC DNA]</scope>
    <source>
        <strain>ATCC 51449 / 3B1</strain>
    </source>
</reference>